<sequence length="688" mass="73189">MNENKGNFANKKMIKRAVKDSFIKLSPKTQMENPVMFLVYISSILTTVLYAVSLVGIRDSKSSFILGITIILWITVLFANFAEAIAEGRGKAQADSLRAAKKDVEAHKIISLEKKDEITKVSSALLKKGDIVIVVAGEQVPADGEVIDGAASVDESAITGESAPVIRESGGDRSAVTGGTTVISDRLIIQVTSEAGESFLDKMISMVEGAARKKTPNEIALQILLISLTIIFLLVTVSLYSYSIFSANQAGVVNPISVTSLVALLVCLAPTTIGALLSSIGIAGMSRLNQANVLAMSGRAIEAAGDVDILMLDKTGTITLGNREACEFIPVNRVDENELADAAQLSSLADETPEGRSIVVLAKEKFGIRGRNIRESNMEFIPFTAKTRMSGVNYNNSEIRKGAAETVKDYVISRGGYYSKECDEIVARISNKGGTPLVVAKDNKVLGVVYLKDIIKQGVQEKFADLRKMGIKTIMITGDNPLTAAAIAAEAGVDDFLAEATPEGKLEMIRDFQVKGHLVAMTGDGTNDAPALAQADVAVAMNTGTQAAKEAGNMVDLDSSPTKLIDIVRIGKQLLMTRGSLTTFSIANDLAKYFAIIPALFIGLYPGLSALNIMNLHSAESAIFSAIIYNALIIVALIPLALKGVKYREVSAGKLLSRNLLVYGLGGIIVPFIAIKVIDVLITAIGIV</sequence>
<name>KDPB_CLOBB</name>
<reference key="1">
    <citation type="submission" date="2008-04" db="EMBL/GenBank/DDBJ databases">
        <title>Complete sequence of Clostridium botulinum strain Eklund.</title>
        <authorList>
            <person name="Brinkac L.M."/>
            <person name="Brown J.L."/>
            <person name="Bruce D."/>
            <person name="Detter C."/>
            <person name="Munk C."/>
            <person name="Smith L.A."/>
            <person name="Smith T.J."/>
            <person name="Sutton G."/>
            <person name="Brettin T.S."/>
        </authorList>
    </citation>
    <scope>NUCLEOTIDE SEQUENCE [LARGE SCALE GENOMIC DNA]</scope>
    <source>
        <strain>Eklund 17B / Type B</strain>
    </source>
</reference>
<accession>B2TMJ2</accession>
<protein>
    <recommendedName>
        <fullName evidence="1">Potassium-transporting ATPase ATP-binding subunit</fullName>
        <ecNumber evidence="1">7.2.2.6</ecNumber>
    </recommendedName>
    <alternativeName>
        <fullName evidence="1">ATP phosphohydrolase [potassium-transporting] B chain</fullName>
    </alternativeName>
    <alternativeName>
        <fullName evidence="1">Potassium-binding and translocating subunit B</fullName>
    </alternativeName>
    <alternativeName>
        <fullName evidence="1">Potassium-translocating ATPase B chain</fullName>
    </alternativeName>
</protein>
<proteinExistence type="inferred from homology"/>
<evidence type="ECO:0000255" key="1">
    <source>
        <dbReference type="HAMAP-Rule" id="MF_00285"/>
    </source>
</evidence>
<dbReference type="EC" id="7.2.2.6" evidence="1"/>
<dbReference type="EMBL" id="CP001056">
    <property type="protein sequence ID" value="ACD25164.1"/>
    <property type="molecule type" value="Genomic_DNA"/>
</dbReference>
<dbReference type="SMR" id="B2TMJ2"/>
<dbReference type="KEGG" id="cbk:CLL_A0979"/>
<dbReference type="PATRIC" id="fig|935198.13.peg.929"/>
<dbReference type="HOGENOM" id="CLU_025728_2_0_9"/>
<dbReference type="Proteomes" id="UP000001195">
    <property type="component" value="Chromosome"/>
</dbReference>
<dbReference type="GO" id="GO:0005886">
    <property type="term" value="C:plasma membrane"/>
    <property type="evidence" value="ECO:0007669"/>
    <property type="project" value="UniProtKB-SubCell"/>
</dbReference>
<dbReference type="GO" id="GO:0005524">
    <property type="term" value="F:ATP binding"/>
    <property type="evidence" value="ECO:0007669"/>
    <property type="project" value="UniProtKB-UniRule"/>
</dbReference>
<dbReference type="GO" id="GO:0016887">
    <property type="term" value="F:ATP hydrolysis activity"/>
    <property type="evidence" value="ECO:0007669"/>
    <property type="project" value="InterPro"/>
</dbReference>
<dbReference type="GO" id="GO:0000287">
    <property type="term" value="F:magnesium ion binding"/>
    <property type="evidence" value="ECO:0007669"/>
    <property type="project" value="UniProtKB-UniRule"/>
</dbReference>
<dbReference type="GO" id="GO:0008556">
    <property type="term" value="F:P-type potassium transmembrane transporter activity"/>
    <property type="evidence" value="ECO:0007669"/>
    <property type="project" value="UniProtKB-UniRule"/>
</dbReference>
<dbReference type="CDD" id="cd02078">
    <property type="entry name" value="P-type_ATPase_K"/>
    <property type="match status" value="1"/>
</dbReference>
<dbReference type="FunFam" id="2.70.150.10:FF:000010">
    <property type="entry name" value="Potassium-transporting ATPase ATP-binding subunit"/>
    <property type="match status" value="1"/>
</dbReference>
<dbReference type="FunFam" id="3.40.1110.10:FF:000007">
    <property type="entry name" value="Potassium-transporting ATPase ATP-binding subunit"/>
    <property type="match status" value="1"/>
</dbReference>
<dbReference type="Gene3D" id="3.40.1110.10">
    <property type="entry name" value="Calcium-transporting ATPase, cytoplasmic domain N"/>
    <property type="match status" value="1"/>
</dbReference>
<dbReference type="Gene3D" id="2.70.150.10">
    <property type="entry name" value="Calcium-transporting ATPase, cytoplasmic transduction domain A"/>
    <property type="match status" value="1"/>
</dbReference>
<dbReference type="Gene3D" id="3.40.50.1000">
    <property type="entry name" value="HAD superfamily/HAD-like"/>
    <property type="match status" value="1"/>
</dbReference>
<dbReference type="HAMAP" id="MF_00285">
    <property type="entry name" value="KdpB"/>
    <property type="match status" value="1"/>
</dbReference>
<dbReference type="InterPro" id="IPR023299">
    <property type="entry name" value="ATPase_P-typ_cyto_dom_N"/>
</dbReference>
<dbReference type="InterPro" id="IPR018303">
    <property type="entry name" value="ATPase_P-typ_P_site"/>
</dbReference>
<dbReference type="InterPro" id="IPR023298">
    <property type="entry name" value="ATPase_P-typ_TM_dom_sf"/>
</dbReference>
<dbReference type="InterPro" id="IPR008250">
    <property type="entry name" value="ATPase_P-typ_transduc_dom_A_sf"/>
</dbReference>
<dbReference type="InterPro" id="IPR036412">
    <property type="entry name" value="HAD-like_sf"/>
</dbReference>
<dbReference type="InterPro" id="IPR023214">
    <property type="entry name" value="HAD_sf"/>
</dbReference>
<dbReference type="InterPro" id="IPR006391">
    <property type="entry name" value="P-type_ATPase_bsu_IA"/>
</dbReference>
<dbReference type="InterPro" id="IPR001757">
    <property type="entry name" value="P_typ_ATPase"/>
</dbReference>
<dbReference type="InterPro" id="IPR044492">
    <property type="entry name" value="P_typ_ATPase_HD_dom"/>
</dbReference>
<dbReference type="NCBIfam" id="TIGR01494">
    <property type="entry name" value="ATPase_P-type"/>
    <property type="match status" value="2"/>
</dbReference>
<dbReference type="NCBIfam" id="TIGR01497">
    <property type="entry name" value="kdpB"/>
    <property type="match status" value="1"/>
</dbReference>
<dbReference type="PANTHER" id="PTHR43743">
    <property type="entry name" value="POTASSIUM-TRANSPORTING ATPASE ATP-BINDING SUBUNIT"/>
    <property type="match status" value="1"/>
</dbReference>
<dbReference type="PANTHER" id="PTHR43743:SF1">
    <property type="entry name" value="POTASSIUM-TRANSPORTING ATPASE ATP-BINDING SUBUNIT"/>
    <property type="match status" value="1"/>
</dbReference>
<dbReference type="Pfam" id="PF00122">
    <property type="entry name" value="E1-E2_ATPase"/>
    <property type="match status" value="1"/>
</dbReference>
<dbReference type="Pfam" id="PF00702">
    <property type="entry name" value="Hydrolase"/>
    <property type="match status" value="1"/>
</dbReference>
<dbReference type="PRINTS" id="PR00119">
    <property type="entry name" value="CATATPASE"/>
</dbReference>
<dbReference type="SFLD" id="SFLDG00002">
    <property type="entry name" value="C1.7:_P-type_atpase_like"/>
    <property type="match status" value="1"/>
</dbReference>
<dbReference type="SFLD" id="SFLDF00027">
    <property type="entry name" value="p-type_atpase"/>
    <property type="match status" value="1"/>
</dbReference>
<dbReference type="SUPFAM" id="SSF81653">
    <property type="entry name" value="Calcium ATPase, transduction domain A"/>
    <property type="match status" value="1"/>
</dbReference>
<dbReference type="SUPFAM" id="SSF81665">
    <property type="entry name" value="Calcium ATPase, transmembrane domain M"/>
    <property type="match status" value="1"/>
</dbReference>
<dbReference type="SUPFAM" id="SSF56784">
    <property type="entry name" value="HAD-like"/>
    <property type="match status" value="1"/>
</dbReference>
<dbReference type="SUPFAM" id="SSF81660">
    <property type="entry name" value="Metal cation-transporting ATPase, ATP-binding domain N"/>
    <property type="match status" value="1"/>
</dbReference>
<dbReference type="PROSITE" id="PS00154">
    <property type="entry name" value="ATPASE_E1_E2"/>
    <property type="match status" value="1"/>
</dbReference>
<feature type="chain" id="PRO_1000114950" description="Potassium-transporting ATPase ATP-binding subunit">
    <location>
        <begin position="1"/>
        <end position="688"/>
    </location>
</feature>
<feature type="transmembrane region" description="Helical" evidence="1">
    <location>
        <begin position="37"/>
        <end position="57"/>
    </location>
</feature>
<feature type="transmembrane region" description="Helical" evidence="1">
    <location>
        <begin position="65"/>
        <end position="85"/>
    </location>
</feature>
<feature type="transmembrane region" description="Helical" evidence="1">
    <location>
        <begin position="219"/>
        <end position="239"/>
    </location>
</feature>
<feature type="transmembrane region" description="Helical" evidence="1">
    <location>
        <begin position="262"/>
        <end position="282"/>
    </location>
</feature>
<feature type="transmembrane region" description="Helical" evidence="1">
    <location>
        <begin position="594"/>
        <end position="614"/>
    </location>
</feature>
<feature type="transmembrane region" description="Helical" evidence="1">
    <location>
        <begin position="622"/>
        <end position="642"/>
    </location>
</feature>
<feature type="transmembrane region" description="Helical" evidence="1">
    <location>
        <begin position="668"/>
        <end position="688"/>
    </location>
</feature>
<feature type="active site" description="4-aspartylphosphate intermediate" evidence="1">
    <location>
        <position position="313"/>
    </location>
</feature>
<feature type="binding site" evidence="1">
    <location>
        <position position="350"/>
    </location>
    <ligand>
        <name>ATP</name>
        <dbReference type="ChEBI" id="CHEBI:30616"/>
    </ligand>
</feature>
<feature type="binding site" evidence="1">
    <location>
        <position position="354"/>
    </location>
    <ligand>
        <name>ATP</name>
        <dbReference type="ChEBI" id="CHEBI:30616"/>
    </ligand>
</feature>
<feature type="binding site" evidence="1">
    <location>
        <begin position="383"/>
        <end position="390"/>
    </location>
    <ligand>
        <name>ATP</name>
        <dbReference type="ChEBI" id="CHEBI:30616"/>
    </ligand>
</feature>
<feature type="binding site" evidence="1">
    <location>
        <position position="401"/>
    </location>
    <ligand>
        <name>ATP</name>
        <dbReference type="ChEBI" id="CHEBI:30616"/>
    </ligand>
</feature>
<feature type="binding site" evidence="1">
    <location>
        <position position="524"/>
    </location>
    <ligand>
        <name>Mg(2+)</name>
        <dbReference type="ChEBI" id="CHEBI:18420"/>
    </ligand>
</feature>
<feature type="binding site" evidence="1">
    <location>
        <position position="528"/>
    </location>
    <ligand>
        <name>Mg(2+)</name>
        <dbReference type="ChEBI" id="CHEBI:18420"/>
    </ligand>
</feature>
<organism>
    <name type="scientific">Clostridium botulinum (strain Eklund 17B / Type B)</name>
    <dbReference type="NCBI Taxonomy" id="935198"/>
    <lineage>
        <taxon>Bacteria</taxon>
        <taxon>Bacillati</taxon>
        <taxon>Bacillota</taxon>
        <taxon>Clostridia</taxon>
        <taxon>Eubacteriales</taxon>
        <taxon>Clostridiaceae</taxon>
        <taxon>Clostridium</taxon>
    </lineage>
</organism>
<gene>
    <name evidence="1" type="primary">kdpB</name>
    <name type="ordered locus">CLL_A0979</name>
</gene>
<comment type="function">
    <text evidence="1">Part of the high-affinity ATP-driven potassium transport (or Kdp) system, which catalyzes the hydrolysis of ATP coupled with the electrogenic transport of potassium into the cytoplasm. This subunit is responsible for energy coupling to the transport system and for the release of the potassium ions to the cytoplasm.</text>
</comment>
<comment type="catalytic activity">
    <reaction evidence="1">
        <text>K(+)(out) + ATP + H2O = K(+)(in) + ADP + phosphate + H(+)</text>
        <dbReference type="Rhea" id="RHEA:16777"/>
        <dbReference type="ChEBI" id="CHEBI:15377"/>
        <dbReference type="ChEBI" id="CHEBI:15378"/>
        <dbReference type="ChEBI" id="CHEBI:29103"/>
        <dbReference type="ChEBI" id="CHEBI:30616"/>
        <dbReference type="ChEBI" id="CHEBI:43474"/>
        <dbReference type="ChEBI" id="CHEBI:456216"/>
        <dbReference type="EC" id="7.2.2.6"/>
    </reaction>
    <physiologicalReaction direction="left-to-right" evidence="1">
        <dbReference type="Rhea" id="RHEA:16778"/>
    </physiologicalReaction>
</comment>
<comment type="subunit">
    <text evidence="1">The system is composed of three essential subunits: KdpA, KdpB and KdpC.</text>
</comment>
<comment type="subcellular location">
    <subcellularLocation>
        <location evidence="1">Cell membrane</location>
        <topology evidence="1">Multi-pass membrane protein</topology>
    </subcellularLocation>
</comment>
<comment type="similarity">
    <text evidence="1">Belongs to the cation transport ATPase (P-type) (TC 3.A.3) family. Type IA subfamily.</text>
</comment>
<keyword id="KW-0067">ATP-binding</keyword>
<keyword id="KW-1003">Cell membrane</keyword>
<keyword id="KW-0406">Ion transport</keyword>
<keyword id="KW-0460">Magnesium</keyword>
<keyword id="KW-0472">Membrane</keyword>
<keyword id="KW-0479">Metal-binding</keyword>
<keyword id="KW-0547">Nucleotide-binding</keyword>
<keyword id="KW-0597">Phosphoprotein</keyword>
<keyword id="KW-0630">Potassium</keyword>
<keyword id="KW-0633">Potassium transport</keyword>
<keyword id="KW-1278">Translocase</keyword>
<keyword id="KW-0812">Transmembrane</keyword>
<keyword id="KW-1133">Transmembrane helix</keyword>
<keyword id="KW-0813">Transport</keyword>